<protein>
    <recommendedName>
        <fullName>ATP synthase subunit H, mitochondrial</fullName>
    </recommendedName>
</protein>
<keyword id="KW-0002">3D-structure</keyword>
<keyword id="KW-0066">ATP synthesis</keyword>
<keyword id="KW-0138">CF(0)</keyword>
<keyword id="KW-0903">Direct protein sequencing</keyword>
<keyword id="KW-0375">Hydrogen ion transport</keyword>
<keyword id="KW-0406">Ion transport</keyword>
<keyword id="KW-0472">Membrane</keyword>
<keyword id="KW-0496">Mitochondrion</keyword>
<keyword id="KW-0999">Mitochondrion inner membrane</keyword>
<keyword id="KW-1185">Reference proteome</keyword>
<keyword id="KW-0809">Transit peptide</keyword>
<keyword id="KW-0813">Transport</keyword>
<sequence length="124" mass="14128">MFPIASRRILLNASVLPLRLCNRNFTTTRISYNVIQDLYLRELKDTKLAPSTLQDAEGNVKPWNPPQKPNLPELELQGPEALKAYTEQNVETAHVAKESEEGESEPIEEDWLVLDDAEETKESH</sequence>
<feature type="transit peptide" description="Mitochondrion">
    <location>
        <begin position="1"/>
        <end position="32"/>
    </location>
</feature>
<feature type="chain" id="PRO_0000002525" description="ATP synthase subunit H, mitochondrial">
    <location>
        <begin position="33"/>
        <end position="124"/>
    </location>
</feature>
<feature type="region of interest" description="Disordered" evidence="1">
    <location>
        <begin position="89"/>
        <end position="124"/>
    </location>
</feature>
<feature type="compositionally biased region" description="Acidic residues" evidence="1">
    <location>
        <begin position="100"/>
        <end position="124"/>
    </location>
</feature>
<accession>Q12349</accession>
<accession>D6VYU0</accession>
<organism>
    <name type="scientific">Saccharomyces cerevisiae (strain ATCC 204508 / S288c)</name>
    <name type="common">Baker's yeast</name>
    <dbReference type="NCBI Taxonomy" id="559292"/>
    <lineage>
        <taxon>Eukaryota</taxon>
        <taxon>Fungi</taxon>
        <taxon>Dikarya</taxon>
        <taxon>Ascomycota</taxon>
        <taxon>Saccharomycotina</taxon>
        <taxon>Saccharomycetes</taxon>
        <taxon>Saccharomycetales</taxon>
        <taxon>Saccharomycetaceae</taxon>
        <taxon>Saccharomyces</taxon>
    </lineage>
</organism>
<gene>
    <name type="primary">ATP14</name>
    <name type="ordered locus">YLR295C</name>
    <name type="ORF">L8003.20</name>
</gene>
<reference key="1">
    <citation type="journal article" date="1996" name="J. Biol. Chem.">
        <title>ATP synthase of yeast mitochondria. Isolation of the subunit h and disruption of the ATP14 gene.</title>
        <authorList>
            <person name="Arselin G."/>
            <person name="Vaillier J."/>
            <person name="Graves P.-V."/>
            <person name="Velours J."/>
        </authorList>
    </citation>
    <scope>NUCLEOTIDE SEQUENCE [GENOMIC DNA]</scope>
    <scope>PARTIAL PROTEIN SEQUENCE</scope>
    <source>
        <strain>D273-10B/A/H/U</strain>
    </source>
</reference>
<reference key="2">
    <citation type="journal article" date="1997" name="Nature">
        <title>The nucleotide sequence of Saccharomyces cerevisiae chromosome XII.</title>
        <authorList>
            <person name="Johnston M."/>
            <person name="Hillier L.W."/>
            <person name="Riles L."/>
            <person name="Albermann K."/>
            <person name="Andre B."/>
            <person name="Ansorge W."/>
            <person name="Benes V."/>
            <person name="Brueckner M."/>
            <person name="Delius H."/>
            <person name="Dubois E."/>
            <person name="Duesterhoeft A."/>
            <person name="Entian K.-D."/>
            <person name="Floeth M."/>
            <person name="Goffeau A."/>
            <person name="Hebling U."/>
            <person name="Heumann K."/>
            <person name="Heuss-Neitzel D."/>
            <person name="Hilbert H."/>
            <person name="Hilger F."/>
            <person name="Kleine K."/>
            <person name="Koetter P."/>
            <person name="Louis E.J."/>
            <person name="Messenguy F."/>
            <person name="Mewes H.-W."/>
            <person name="Miosga T."/>
            <person name="Moestl D."/>
            <person name="Mueller-Auer S."/>
            <person name="Nentwich U."/>
            <person name="Obermaier B."/>
            <person name="Piravandi E."/>
            <person name="Pohl T.M."/>
            <person name="Portetelle D."/>
            <person name="Purnelle B."/>
            <person name="Rechmann S."/>
            <person name="Rieger M."/>
            <person name="Rinke M."/>
            <person name="Rose M."/>
            <person name="Scharfe M."/>
            <person name="Scherens B."/>
            <person name="Scholler P."/>
            <person name="Schwager C."/>
            <person name="Schwarz S."/>
            <person name="Underwood A.P."/>
            <person name="Urrestarazu L.A."/>
            <person name="Vandenbol M."/>
            <person name="Verhasselt P."/>
            <person name="Vierendeels F."/>
            <person name="Voet M."/>
            <person name="Volckaert G."/>
            <person name="Voss H."/>
            <person name="Wambutt R."/>
            <person name="Wedler E."/>
            <person name="Wedler H."/>
            <person name="Zimmermann F.K."/>
            <person name="Zollner A."/>
            <person name="Hani J."/>
            <person name="Hoheisel J.D."/>
        </authorList>
    </citation>
    <scope>NUCLEOTIDE SEQUENCE [LARGE SCALE GENOMIC DNA]</scope>
    <source>
        <strain>ATCC 204508 / S288c</strain>
    </source>
</reference>
<reference key="3">
    <citation type="journal article" date="2014" name="G3 (Bethesda)">
        <title>The reference genome sequence of Saccharomyces cerevisiae: Then and now.</title>
        <authorList>
            <person name="Engel S.R."/>
            <person name="Dietrich F.S."/>
            <person name="Fisk D.G."/>
            <person name="Binkley G."/>
            <person name="Balakrishnan R."/>
            <person name="Costanzo M.C."/>
            <person name="Dwight S.S."/>
            <person name="Hitz B.C."/>
            <person name="Karra K."/>
            <person name="Nash R.S."/>
            <person name="Weng S."/>
            <person name="Wong E.D."/>
            <person name="Lloyd P."/>
            <person name="Skrzypek M.S."/>
            <person name="Miyasato S.R."/>
            <person name="Simison M."/>
            <person name="Cherry J.M."/>
        </authorList>
    </citation>
    <scope>GENOME REANNOTATION</scope>
    <source>
        <strain>ATCC 204508 / S288c</strain>
    </source>
</reference>
<reference key="4">
    <citation type="journal article" date="2007" name="Genome Res.">
        <title>Approaching a complete repository of sequence-verified protein-encoding clones for Saccharomyces cerevisiae.</title>
        <authorList>
            <person name="Hu Y."/>
            <person name="Rolfs A."/>
            <person name="Bhullar B."/>
            <person name="Murthy T.V.S."/>
            <person name="Zhu C."/>
            <person name="Berger M.F."/>
            <person name="Camargo A.A."/>
            <person name="Kelley F."/>
            <person name="McCarron S."/>
            <person name="Jepson D."/>
            <person name="Richardson A."/>
            <person name="Raphael J."/>
            <person name="Moreira D."/>
            <person name="Taycher E."/>
            <person name="Zuo D."/>
            <person name="Mohr S."/>
            <person name="Kane M.F."/>
            <person name="Williamson J."/>
            <person name="Simpson A.J.G."/>
            <person name="Bulyk M.L."/>
            <person name="Harlow E."/>
            <person name="Marsischky G."/>
            <person name="Kolodner R.D."/>
            <person name="LaBaer J."/>
        </authorList>
    </citation>
    <scope>NUCLEOTIDE SEQUENCE [GENOMIC DNA]</scope>
    <source>
        <strain>ATCC 204508 / S288c</strain>
    </source>
</reference>
<reference key="5">
    <citation type="journal article" date="2003" name="Nature">
        <title>Global analysis of protein expression in yeast.</title>
        <authorList>
            <person name="Ghaemmaghami S."/>
            <person name="Huh W.-K."/>
            <person name="Bower K."/>
            <person name="Howson R.W."/>
            <person name="Belle A."/>
            <person name="Dephoure N."/>
            <person name="O'Shea E.K."/>
            <person name="Weissman J.S."/>
        </authorList>
    </citation>
    <scope>LEVEL OF PROTEIN EXPRESSION [LARGE SCALE ANALYSIS]</scope>
</reference>
<proteinExistence type="evidence at protein level"/>
<comment type="function">
    <text>Mitochondrial membrane ATP synthase (F(1)F(0) ATP synthase or Complex V) produces ATP from ADP in the presence of a proton gradient across the membrane which is generated by electron transport complexes of the respiratory chain. F-type ATPases consist of two structural domains, F(1) - containing the extramembraneous catalytic core and F(0) - containing the membrane proton channel, linked together by a central stalk and a peripheral stalk. During catalysis, ATP synthesis in the catalytic domain of F(1) is coupled via a rotary mechanism of the central stalk subunits to proton translocation. Part of the complex F(0) domain. Minor subunit located with subunit a in the membrane.</text>
</comment>
<comment type="subunit">
    <text>F-type ATPases have 2 components, CF(1) - the catalytic core - and CF(0) - the membrane proton channel. In yeast, the dimeric form of ATP synthase consists of 17 polypeptides: alpha, beta, gamma, delta, epsilon, 4 (B), 5 (OSCP), 6 (A), 8, 9 (C), d, E (Tim11), f, g, h, i/j and k.</text>
</comment>
<comment type="subcellular location">
    <subcellularLocation>
        <location>Mitochondrion</location>
    </subcellularLocation>
    <subcellularLocation>
        <location>Mitochondrion inner membrane</location>
    </subcellularLocation>
</comment>
<comment type="miscellaneous">
    <text evidence="2">Present with 6140 molecules/cell in log phase SD medium.</text>
</comment>
<comment type="similarity">
    <text evidence="3">Belongs to the ATPase h subunit family.</text>
</comment>
<name>ATP14_YEAST</name>
<dbReference type="EMBL" id="U51673">
    <property type="protein sequence ID" value="AAC49436.1"/>
    <property type="molecule type" value="Genomic_DNA"/>
</dbReference>
<dbReference type="EMBL" id="U17243">
    <property type="protein sequence ID" value="AAB67340.1"/>
    <property type="molecule type" value="Genomic_DNA"/>
</dbReference>
<dbReference type="EMBL" id="AY558215">
    <property type="protein sequence ID" value="AAS56541.1"/>
    <property type="molecule type" value="Genomic_DNA"/>
</dbReference>
<dbReference type="EMBL" id="BK006945">
    <property type="protein sequence ID" value="DAA09606.1"/>
    <property type="molecule type" value="Genomic_DNA"/>
</dbReference>
<dbReference type="PIR" id="S50379">
    <property type="entry name" value="S50379"/>
</dbReference>
<dbReference type="RefSeq" id="NP_013398.1">
    <property type="nucleotide sequence ID" value="NM_001182183.1"/>
</dbReference>
<dbReference type="PDB" id="6CP3">
    <property type="method" value="EM"/>
    <property type="resolution" value="3.80 A"/>
    <property type="chains" value="6=33-124"/>
</dbReference>
<dbReference type="PDB" id="6CP6">
    <property type="method" value="EM"/>
    <property type="resolution" value="3.60 A"/>
    <property type="chains" value="6=33-124"/>
</dbReference>
<dbReference type="PDB" id="7TJY">
    <property type="method" value="EM"/>
    <property type="resolution" value="3.80 A"/>
    <property type="chains" value="X=33-124"/>
</dbReference>
<dbReference type="PDB" id="7TJZ">
    <property type="method" value="EM"/>
    <property type="resolution" value="4.40 A"/>
    <property type="chains" value="X=33-124"/>
</dbReference>
<dbReference type="PDB" id="7TK0">
    <property type="method" value="EM"/>
    <property type="resolution" value="4.40 A"/>
    <property type="chains" value="X=33-124"/>
</dbReference>
<dbReference type="PDB" id="7TK1">
    <property type="method" value="EM"/>
    <property type="resolution" value="7.10 A"/>
    <property type="chains" value="X=33-124"/>
</dbReference>
<dbReference type="PDB" id="7TK2">
    <property type="method" value="EM"/>
    <property type="resolution" value="6.50 A"/>
    <property type="chains" value="X=33-124"/>
</dbReference>
<dbReference type="PDB" id="7TK3">
    <property type="method" value="EM"/>
    <property type="resolution" value="6.30 A"/>
    <property type="chains" value="X=33-124"/>
</dbReference>
<dbReference type="PDB" id="7TK4">
    <property type="method" value="EM"/>
    <property type="resolution" value="7.00 A"/>
    <property type="chains" value="X=33-124"/>
</dbReference>
<dbReference type="PDB" id="7TK5">
    <property type="method" value="EM"/>
    <property type="resolution" value="7.80 A"/>
    <property type="chains" value="X=33-124"/>
</dbReference>
<dbReference type="PDB" id="7TK6">
    <property type="method" value="EM"/>
    <property type="resolution" value="6.50 A"/>
    <property type="chains" value="X=33-124"/>
</dbReference>
<dbReference type="PDB" id="7TK7">
    <property type="method" value="EM"/>
    <property type="resolution" value="6.70 A"/>
    <property type="chains" value="X=33-124"/>
</dbReference>
<dbReference type="PDB" id="7TK8">
    <property type="method" value="EM"/>
    <property type="resolution" value="4.70 A"/>
    <property type="chains" value="X=33-124"/>
</dbReference>
<dbReference type="PDB" id="7TK9">
    <property type="method" value="EM"/>
    <property type="resolution" value="6.00 A"/>
    <property type="chains" value="X=33-124"/>
</dbReference>
<dbReference type="PDB" id="7TKA">
    <property type="method" value="EM"/>
    <property type="resolution" value="7.10 A"/>
    <property type="chains" value="X=33-124"/>
</dbReference>
<dbReference type="PDB" id="7TKB">
    <property type="method" value="EM"/>
    <property type="resolution" value="6.30 A"/>
    <property type="chains" value="X=33-124"/>
</dbReference>
<dbReference type="PDB" id="7TKC">
    <property type="method" value="EM"/>
    <property type="resolution" value="5.80 A"/>
    <property type="chains" value="X=33-124"/>
</dbReference>
<dbReference type="PDB" id="7TKD">
    <property type="method" value="EM"/>
    <property type="resolution" value="7.70 A"/>
    <property type="chains" value="X=33-124"/>
</dbReference>
<dbReference type="PDB" id="7TKE">
    <property type="method" value="EM"/>
    <property type="resolution" value="7.10 A"/>
    <property type="chains" value="X=33-124"/>
</dbReference>
<dbReference type="PDB" id="7TKF">
    <property type="method" value="EM"/>
    <property type="resolution" value="7.10 A"/>
    <property type="chains" value="X=33-124"/>
</dbReference>
<dbReference type="PDB" id="7TKG">
    <property type="method" value="EM"/>
    <property type="resolution" value="4.50 A"/>
    <property type="chains" value="X=33-124"/>
</dbReference>
<dbReference type="PDB" id="7TKH">
    <property type="method" value="EM"/>
    <property type="resolution" value="4.40 A"/>
    <property type="chains" value="X=33-124"/>
</dbReference>
<dbReference type="PDB" id="7TKI">
    <property type="method" value="EM"/>
    <property type="resolution" value="7.10 A"/>
    <property type="chains" value="X=33-124"/>
</dbReference>
<dbReference type="PDB" id="7TKJ">
    <property type="method" value="EM"/>
    <property type="resolution" value="7.50 A"/>
    <property type="chains" value="X=33-124"/>
</dbReference>
<dbReference type="PDB" id="7TKK">
    <property type="method" value="EM"/>
    <property type="resolution" value="7.30 A"/>
    <property type="chains" value="X=33-124"/>
</dbReference>
<dbReference type="PDB" id="7TKL">
    <property type="method" value="EM"/>
    <property type="resolution" value="6.40 A"/>
    <property type="chains" value="X=33-124"/>
</dbReference>
<dbReference type="PDB" id="7TKM">
    <property type="method" value="EM"/>
    <property type="resolution" value="4.50 A"/>
    <property type="chains" value="X=33-124"/>
</dbReference>
<dbReference type="PDB" id="7TKN">
    <property type="method" value="EM"/>
    <property type="resolution" value="7.10 A"/>
    <property type="chains" value="X=33-124"/>
</dbReference>
<dbReference type="PDB" id="7TKO">
    <property type="method" value="EM"/>
    <property type="resolution" value="4.80 A"/>
    <property type="chains" value="X=33-124"/>
</dbReference>
<dbReference type="PDB" id="7TKP">
    <property type="method" value="EM"/>
    <property type="resolution" value="4.60 A"/>
    <property type="chains" value="X=33-124"/>
</dbReference>
<dbReference type="PDB" id="7TKQ">
    <property type="method" value="EM"/>
    <property type="resolution" value="4.50 A"/>
    <property type="chains" value="X=33-124"/>
</dbReference>
<dbReference type="PDB" id="7TKR">
    <property type="method" value="EM"/>
    <property type="resolution" value="6.50 A"/>
    <property type="chains" value="X=33-124"/>
</dbReference>
<dbReference type="PDB" id="7TKS">
    <property type="method" value="EM"/>
    <property type="resolution" value="7.50 A"/>
    <property type="chains" value="X=33-124"/>
</dbReference>
<dbReference type="PDB" id="8F29">
    <property type="method" value="EM"/>
    <property type="resolution" value="4.00 A"/>
    <property type="chains" value="6=36-124"/>
</dbReference>
<dbReference type="PDB" id="8F39">
    <property type="method" value="EM"/>
    <property type="resolution" value="3.50 A"/>
    <property type="chains" value="6=36-124"/>
</dbReference>
<dbReference type="PDB" id="8FKJ">
    <property type="method" value="EM"/>
    <property type="resolution" value="4.20 A"/>
    <property type="chains" value="6=36-124"/>
</dbReference>
<dbReference type="PDB" id="8FL8">
    <property type="method" value="EM"/>
    <property type="resolution" value="4.20 A"/>
    <property type="chains" value="6=36-124"/>
</dbReference>
<dbReference type="PDBsum" id="6CP3"/>
<dbReference type="PDBsum" id="6CP6"/>
<dbReference type="PDBsum" id="7TJY"/>
<dbReference type="PDBsum" id="7TJZ"/>
<dbReference type="PDBsum" id="7TK0"/>
<dbReference type="PDBsum" id="7TK1"/>
<dbReference type="PDBsum" id="7TK2"/>
<dbReference type="PDBsum" id="7TK3"/>
<dbReference type="PDBsum" id="7TK4"/>
<dbReference type="PDBsum" id="7TK5"/>
<dbReference type="PDBsum" id="7TK6"/>
<dbReference type="PDBsum" id="7TK7"/>
<dbReference type="PDBsum" id="7TK8"/>
<dbReference type="PDBsum" id="7TK9"/>
<dbReference type="PDBsum" id="7TKA"/>
<dbReference type="PDBsum" id="7TKB"/>
<dbReference type="PDBsum" id="7TKC"/>
<dbReference type="PDBsum" id="7TKD"/>
<dbReference type="PDBsum" id="7TKE"/>
<dbReference type="PDBsum" id="7TKF"/>
<dbReference type="PDBsum" id="7TKG"/>
<dbReference type="PDBsum" id="7TKH"/>
<dbReference type="PDBsum" id="7TKI"/>
<dbReference type="PDBsum" id="7TKJ"/>
<dbReference type="PDBsum" id="7TKK"/>
<dbReference type="PDBsum" id="7TKL"/>
<dbReference type="PDBsum" id="7TKM"/>
<dbReference type="PDBsum" id="7TKN"/>
<dbReference type="PDBsum" id="7TKO"/>
<dbReference type="PDBsum" id="7TKP"/>
<dbReference type="PDBsum" id="7TKQ"/>
<dbReference type="PDBsum" id="7TKR"/>
<dbReference type="PDBsum" id="7TKS"/>
<dbReference type="PDBsum" id="8F29"/>
<dbReference type="PDBsum" id="8F39"/>
<dbReference type="PDBsum" id="8FKJ"/>
<dbReference type="PDBsum" id="8FL8"/>
<dbReference type="EMDB" id="EMD-25946"/>
<dbReference type="EMDB" id="EMD-25947"/>
<dbReference type="EMDB" id="EMD-25948"/>
<dbReference type="EMDB" id="EMD-25949"/>
<dbReference type="EMDB" id="EMD-25954"/>
<dbReference type="EMDB" id="EMD-25955"/>
<dbReference type="EMDB" id="EMD-25956"/>
<dbReference type="EMDB" id="EMD-25957"/>
<dbReference type="EMDB" id="EMD-25958"/>
<dbReference type="EMDB" id="EMD-25959"/>
<dbReference type="EMDB" id="EMD-25960"/>
<dbReference type="EMDB" id="EMD-25961"/>
<dbReference type="EMDB" id="EMD-25962"/>
<dbReference type="EMDB" id="EMD-25963"/>
<dbReference type="EMDB" id="EMD-25964"/>
<dbReference type="EMDB" id="EMD-25965"/>
<dbReference type="EMDB" id="EMD-25966"/>
<dbReference type="EMDB" id="EMD-25967"/>
<dbReference type="EMDB" id="EMD-25968"/>
<dbReference type="EMDB" id="EMD-25969"/>
<dbReference type="EMDB" id="EMD-25970"/>
<dbReference type="EMDB" id="EMD-25971"/>
<dbReference type="EMDB" id="EMD-25972"/>
<dbReference type="EMDB" id="EMD-25973"/>
<dbReference type="EMDB" id="EMD-25974"/>
<dbReference type="EMDB" id="EMD-25975"/>
<dbReference type="EMDB" id="EMD-25976"/>
<dbReference type="EMDB" id="EMD-25977"/>
<dbReference type="EMDB" id="EMD-25978"/>
<dbReference type="EMDB" id="EMD-25979"/>
<dbReference type="EMDB" id="EMD-25980"/>
<dbReference type="EMDB" id="EMD-28809"/>
<dbReference type="EMDB" id="EMD-28835"/>
<dbReference type="EMDB" id="EMD-29250"/>
<dbReference type="EMDB" id="EMD-29270"/>
<dbReference type="EMDB" id="EMD-7546"/>
<dbReference type="EMDB" id="EMD-7548"/>
<dbReference type="SMR" id="Q12349"/>
<dbReference type="BioGRID" id="31560">
    <property type="interactions" value="159"/>
</dbReference>
<dbReference type="ComplexPortal" id="CPX-3281">
    <property type="entry name" value="Mitochondrial proton-transporting ATP synthase complex"/>
</dbReference>
<dbReference type="DIP" id="DIP-3030N"/>
<dbReference type="FunCoup" id="Q12349">
    <property type="interactions" value="214"/>
</dbReference>
<dbReference type="IntAct" id="Q12349">
    <property type="interactions" value="20"/>
</dbReference>
<dbReference type="MINT" id="Q12349"/>
<dbReference type="STRING" id="4932.YLR295C"/>
<dbReference type="MoonDB" id="Q12349">
    <property type="type" value="Predicted"/>
</dbReference>
<dbReference type="TCDB" id="3.A.2.1.3">
    <property type="family name" value="the h+- or na+-translocating f-type, v-type and a-type atpase (f-atpase) superfamily"/>
</dbReference>
<dbReference type="iPTMnet" id="Q12349"/>
<dbReference type="PaxDb" id="4932-YLR295C"/>
<dbReference type="PeptideAtlas" id="Q12349"/>
<dbReference type="PRIDE" id="Q12349"/>
<dbReference type="EnsemblFungi" id="YLR295C_mRNA">
    <property type="protein sequence ID" value="YLR295C"/>
    <property type="gene ID" value="YLR295C"/>
</dbReference>
<dbReference type="GeneID" id="851002"/>
<dbReference type="KEGG" id="sce:YLR295C"/>
<dbReference type="AGR" id="SGD:S000004286"/>
<dbReference type="SGD" id="S000004286">
    <property type="gene designation" value="ATP14"/>
</dbReference>
<dbReference type="VEuPathDB" id="FungiDB:YLR295C"/>
<dbReference type="eggNOG" id="ENOG502SDW5">
    <property type="taxonomic scope" value="Eukaryota"/>
</dbReference>
<dbReference type="HOGENOM" id="CLU_122989_1_0_1"/>
<dbReference type="InParanoid" id="Q12349"/>
<dbReference type="OMA" id="EGATRPW"/>
<dbReference type="OrthoDB" id="274752at2759"/>
<dbReference type="BioCyc" id="YEAST:G3O-32389-MONOMER"/>
<dbReference type="BioGRID-ORCS" id="851002">
    <property type="hits" value="5 hits in 10 CRISPR screens"/>
</dbReference>
<dbReference type="PRO" id="PR:Q12349"/>
<dbReference type="Proteomes" id="UP000002311">
    <property type="component" value="Chromosome XII"/>
</dbReference>
<dbReference type="RNAct" id="Q12349">
    <property type="molecule type" value="protein"/>
</dbReference>
<dbReference type="GO" id="GO:0005743">
    <property type="term" value="C:mitochondrial inner membrane"/>
    <property type="evidence" value="ECO:0000314"/>
    <property type="project" value="ComplexPortal"/>
</dbReference>
<dbReference type="GO" id="GO:0005739">
    <property type="term" value="C:mitochondrion"/>
    <property type="evidence" value="ECO:0007005"/>
    <property type="project" value="SGD"/>
</dbReference>
<dbReference type="GO" id="GO:0045259">
    <property type="term" value="C:proton-transporting ATP synthase complex"/>
    <property type="evidence" value="ECO:0000315"/>
    <property type="project" value="SGD"/>
</dbReference>
<dbReference type="GO" id="GO:0042407">
    <property type="term" value="P:cristae formation"/>
    <property type="evidence" value="ECO:0000315"/>
    <property type="project" value="SGD"/>
</dbReference>
<dbReference type="GO" id="GO:0033615">
    <property type="term" value="P:mitochondrial proton-transporting ATP synthase complex assembly"/>
    <property type="evidence" value="ECO:0000315"/>
    <property type="project" value="SGD"/>
</dbReference>
<dbReference type="GO" id="GO:0015986">
    <property type="term" value="P:proton motive force-driven ATP synthesis"/>
    <property type="evidence" value="ECO:0000314"/>
    <property type="project" value="ComplexPortal"/>
</dbReference>
<dbReference type="GO" id="GO:1902600">
    <property type="term" value="P:proton transmembrane transport"/>
    <property type="evidence" value="ECO:0007669"/>
    <property type="project" value="UniProtKB-KW"/>
</dbReference>
<dbReference type="InterPro" id="IPR019711">
    <property type="entry name" value="ATP_synth_F0_suH"/>
</dbReference>
<dbReference type="PANTHER" id="PTHR28207">
    <property type="entry name" value="ATP SYNTHASE SUBUNIT H, MITOCHONDRIAL"/>
    <property type="match status" value="1"/>
</dbReference>
<dbReference type="PANTHER" id="PTHR28207:SF1">
    <property type="entry name" value="ATP SYNTHASE SUBUNIT H, MITOCHONDRIAL"/>
    <property type="match status" value="1"/>
</dbReference>
<dbReference type="Pfam" id="PF10775">
    <property type="entry name" value="ATP_sub_h"/>
    <property type="match status" value="1"/>
</dbReference>
<evidence type="ECO:0000256" key="1">
    <source>
        <dbReference type="SAM" id="MobiDB-lite"/>
    </source>
</evidence>
<evidence type="ECO:0000269" key="2">
    <source>
    </source>
</evidence>
<evidence type="ECO:0000305" key="3"/>